<sequence length="122" mass="13388">MSTQPLLQTTPGKRIALPVRVEPKVFFANERTFLSWLSFAVVLGGLSVGLLNFGDRIGKISAGLFTIVAIGTMGYALGIYHWRASAIRRRGSGPYDDRLGPTILCFVLLAAIITNFVLRMLF</sequence>
<feature type="chain" id="PRO_0000057948" description="Vacuolar transporter chaperone complex subunit 1">
    <location>
        <begin position="1"/>
        <end position="122"/>
    </location>
</feature>
<feature type="topological domain" description="Cytoplasmic" evidence="1">
    <location>
        <begin position="1"/>
        <end position="32"/>
    </location>
</feature>
<feature type="transmembrane region" description="Helical" evidence="2">
    <location>
        <begin position="33"/>
        <end position="53"/>
    </location>
</feature>
<feature type="topological domain" description="Vacuolar" evidence="1">
    <location>
        <begin position="54"/>
        <end position="59"/>
    </location>
</feature>
<feature type="transmembrane region" description="Helical" evidence="2">
    <location>
        <begin position="60"/>
        <end position="80"/>
    </location>
</feature>
<feature type="topological domain" description="Cytoplasmic" evidence="1">
    <location>
        <begin position="81"/>
        <end position="101"/>
    </location>
</feature>
<feature type="transmembrane region" description="Helical" evidence="2">
    <location>
        <begin position="102"/>
        <end position="122"/>
    </location>
</feature>
<proteinExistence type="evidence at transcript level"/>
<name>VTC1_SCHPO</name>
<evidence type="ECO:0000250" key="1">
    <source>
        <dbReference type="UniProtKB" id="P40046"/>
    </source>
</evidence>
<evidence type="ECO:0000255" key="2"/>
<evidence type="ECO:0000269" key="3">
    <source>
    </source>
</evidence>
<evidence type="ECO:0000269" key="4">
    <source>
    </source>
</evidence>
<evidence type="ECO:0000303" key="5">
    <source>
    </source>
</evidence>
<evidence type="ECO:0000305" key="6"/>
<protein>
    <recommendedName>
        <fullName>Vacuolar transporter chaperone complex subunit 1</fullName>
    </recommendedName>
    <alternativeName>
        <fullName evidence="5">Negative regulator of cdc42</fullName>
    </alternativeName>
    <alternativeName>
        <fullName>SPX-dependent polyphosphate polymerase VTC subunit 1</fullName>
    </alternativeName>
    <alternativeName>
        <fullName>Vacuolar membrane polyphosphate polymerase accessory subunit 1</fullName>
        <shortName>PolyP polymerase</shortName>
    </alternativeName>
</protein>
<organism>
    <name type="scientific">Schizosaccharomyces pombe (strain 972 / ATCC 24843)</name>
    <name type="common">Fission yeast</name>
    <dbReference type="NCBI Taxonomy" id="284812"/>
    <lineage>
        <taxon>Eukaryota</taxon>
        <taxon>Fungi</taxon>
        <taxon>Dikarya</taxon>
        <taxon>Ascomycota</taxon>
        <taxon>Taphrinomycotina</taxon>
        <taxon>Schizosaccharomycetes</taxon>
        <taxon>Schizosaccharomycetales</taxon>
        <taxon>Schizosaccharomycetaceae</taxon>
        <taxon>Schizosaccharomyces</taxon>
    </lineage>
</organism>
<accession>Q9UR17</accession>
<dbReference type="EMBL" id="AF087832">
    <property type="protein sequence ID" value="AAD53227.1"/>
    <property type="molecule type" value="mRNA"/>
</dbReference>
<dbReference type="EMBL" id="CU329671">
    <property type="protein sequence ID" value="CAB57926.1"/>
    <property type="molecule type" value="Genomic_DNA"/>
</dbReference>
<dbReference type="PIR" id="T39923">
    <property type="entry name" value="T39923"/>
</dbReference>
<dbReference type="RefSeq" id="NP_595683.1">
    <property type="nucleotide sequence ID" value="NM_001021578.2"/>
</dbReference>
<dbReference type="SMR" id="Q9UR17"/>
<dbReference type="BioGRID" id="277291">
    <property type="interactions" value="6"/>
</dbReference>
<dbReference type="FunCoup" id="Q9UR17">
    <property type="interactions" value="34"/>
</dbReference>
<dbReference type="STRING" id="284812.Q9UR17"/>
<dbReference type="iPTMnet" id="Q9UR17"/>
<dbReference type="PaxDb" id="4896-SPBC21B10.04c.1"/>
<dbReference type="EnsemblFungi" id="SPBC21B10.04c.1">
    <property type="protein sequence ID" value="SPBC21B10.04c.1:pep"/>
    <property type="gene ID" value="SPBC21B10.04c"/>
</dbReference>
<dbReference type="GeneID" id="2540771"/>
<dbReference type="KEGG" id="spo:2540771"/>
<dbReference type="PomBase" id="SPBC21B10.04c">
    <property type="gene designation" value="nrf1"/>
</dbReference>
<dbReference type="VEuPathDB" id="FungiDB:SPBC21B10.04c"/>
<dbReference type="eggNOG" id="KOG4580">
    <property type="taxonomic scope" value="Eukaryota"/>
</dbReference>
<dbReference type="HOGENOM" id="CLU_141247_1_0_1"/>
<dbReference type="InParanoid" id="Q9UR17"/>
<dbReference type="OMA" id="MAIMIYA"/>
<dbReference type="PhylomeDB" id="Q9UR17"/>
<dbReference type="PRO" id="PR:Q9UR17"/>
<dbReference type="Proteomes" id="UP000002485">
    <property type="component" value="Chromosome II"/>
</dbReference>
<dbReference type="GO" id="GO:0032153">
    <property type="term" value="C:cell division site"/>
    <property type="evidence" value="ECO:0000314"/>
    <property type="project" value="PomBase"/>
</dbReference>
<dbReference type="GO" id="GO:0005783">
    <property type="term" value="C:endoplasmic reticulum"/>
    <property type="evidence" value="ECO:0007005"/>
    <property type="project" value="PomBase"/>
</dbReference>
<dbReference type="GO" id="GO:0000329">
    <property type="term" value="C:fungal-type vacuole membrane"/>
    <property type="evidence" value="ECO:0000314"/>
    <property type="project" value="PomBase"/>
</dbReference>
<dbReference type="GO" id="GO:0033254">
    <property type="term" value="C:vacuolar transporter chaperone complex"/>
    <property type="evidence" value="ECO:0000266"/>
    <property type="project" value="PomBase"/>
</dbReference>
<dbReference type="GO" id="GO:0030695">
    <property type="term" value="F:GTPase regulator activity"/>
    <property type="evidence" value="ECO:0000316"/>
    <property type="project" value="PomBase"/>
</dbReference>
<dbReference type="GO" id="GO:0006112">
    <property type="term" value="P:energy reserve metabolic process"/>
    <property type="evidence" value="ECO:0000305"/>
    <property type="project" value="PomBase"/>
</dbReference>
<dbReference type="GO" id="GO:0006799">
    <property type="term" value="P:polyphosphate biosynthetic process"/>
    <property type="evidence" value="ECO:0000266"/>
    <property type="project" value="PomBase"/>
</dbReference>
<dbReference type="GO" id="GO:0180042">
    <property type="term" value="P:polyphosphate import into vacuole"/>
    <property type="evidence" value="ECO:0000305"/>
    <property type="project" value="PomBase"/>
</dbReference>
<dbReference type="InterPro" id="IPR003807">
    <property type="entry name" value="DUF202"/>
</dbReference>
<dbReference type="InterPro" id="IPR051572">
    <property type="entry name" value="VTC_Complex_Subunit"/>
</dbReference>
<dbReference type="PANTHER" id="PTHR46140">
    <property type="entry name" value="VACUOLAR TRANSPORTER CHAPERONE 1-RELATED"/>
    <property type="match status" value="1"/>
</dbReference>
<dbReference type="PANTHER" id="PTHR46140:SF1">
    <property type="entry name" value="VACUOLAR TRANSPORTER CHAPERONE COMPLEX SUBUNIT 4-RELATED"/>
    <property type="match status" value="1"/>
</dbReference>
<dbReference type="Pfam" id="PF02656">
    <property type="entry name" value="DUF202"/>
    <property type="match status" value="1"/>
</dbReference>
<comment type="function">
    <text evidence="1 3">Accessory subunit of the vacuolar transporter chaperone (VTC) complex. The VTC complex acts as a vacuolar polyphosphate polymerase that catalyzes the synthesis of inorganic polyphosphate (polyP) via transfer of phosphate from ATP to a growing polyP chain, releasing ADP. VTC exposes its catalytic domain vtc4 to the cytosol, where the growing polyP chain winds through a tunnel-shaped pocket, integrating cytoplasmic polymer synthesis with polyP membrane translocation. The VTC complex carries 9 vacuolar transmembrane domains, which are likely to constitute the translocation channel into the organelle lumen. PolyP synthesis is tightly coupled to its transport into the vacuole lumen, in order to avoid otherwise toxic intermediates in the cytosol, and it depends on the proton gradient across the membrane, formed by V-ATPase. Vtc1 contributes only 3 transmembrane domains to the complex. The VTC complex also plays a role in vacuolar membrane fusion (By similarity). Involved in the control of cell polarity (PubMed:10628977).</text>
</comment>
<comment type="subunit">
    <text evidence="1 3">The VTC core complex is an integral membrane heterooligomer composed of at least the catalytic subunit vtc4 and the accessory subunits vtc1 and vtc2. vtc1 is a small membrane protein without hydrophilic domain. Vtc2 and vtc4 are related and have 2 hydrophilic domains that face the cytosol, an N-terminal SPX domain and the central core domain. The central core in vtc4 is the catalytic domain (By similarity). Vtc1 interacts with GTP-bound Ras-like cdc42, which is subsequently inactivated (PubMed:10628977).</text>
</comment>
<comment type="subcellular location">
    <subcellularLocation>
        <location evidence="3 4">Vacuole membrane</location>
        <topology evidence="2">Multi-pass membrane protein</topology>
    </subcellularLocation>
</comment>
<comment type="disruption phenotype">
    <text evidence="4">Defects in endocytosis.</text>
</comment>
<comment type="similarity">
    <text evidence="6">Belongs to the VTC1 family.</text>
</comment>
<gene>
    <name evidence="5" type="primary">nrf1</name>
    <name type="synonym">vtc1</name>
    <name type="ORF">SPBC21B10.04c</name>
</gene>
<keyword id="KW-0131">Cell cycle</keyword>
<keyword id="KW-0143">Chaperone</keyword>
<keyword id="KW-0472">Membrane</keyword>
<keyword id="KW-1185">Reference proteome</keyword>
<keyword id="KW-0812">Transmembrane</keyword>
<keyword id="KW-1133">Transmembrane helix</keyword>
<keyword id="KW-0926">Vacuole</keyword>
<reference key="1">
    <citation type="journal article" date="2000" name="Genetics">
        <title>Isolation and characterization of Nrf1p, a novel negative regulator of the Cdc42p GTPase in Schizosaccharomyces pombe.</title>
        <authorList>
            <person name="Murray J.M."/>
            <person name="Johnson D.I."/>
        </authorList>
    </citation>
    <scope>NUCLEOTIDE SEQUENCE [MRNA]</scope>
    <scope>FUNCTION</scope>
    <scope>SUBCELLULAR LOCATION</scope>
</reference>
<reference key="2">
    <citation type="journal article" date="2002" name="Nature">
        <title>The genome sequence of Schizosaccharomyces pombe.</title>
        <authorList>
            <person name="Wood V."/>
            <person name="Gwilliam R."/>
            <person name="Rajandream M.A."/>
            <person name="Lyne M.H."/>
            <person name="Lyne R."/>
            <person name="Stewart A."/>
            <person name="Sgouros J.G."/>
            <person name="Peat N."/>
            <person name="Hayles J."/>
            <person name="Baker S.G."/>
            <person name="Basham D."/>
            <person name="Bowman S."/>
            <person name="Brooks K."/>
            <person name="Brown D."/>
            <person name="Brown S."/>
            <person name="Chillingworth T."/>
            <person name="Churcher C.M."/>
            <person name="Collins M."/>
            <person name="Connor R."/>
            <person name="Cronin A."/>
            <person name="Davis P."/>
            <person name="Feltwell T."/>
            <person name="Fraser A."/>
            <person name="Gentles S."/>
            <person name="Goble A."/>
            <person name="Hamlin N."/>
            <person name="Harris D.E."/>
            <person name="Hidalgo J."/>
            <person name="Hodgson G."/>
            <person name="Holroyd S."/>
            <person name="Hornsby T."/>
            <person name="Howarth S."/>
            <person name="Huckle E.J."/>
            <person name="Hunt S."/>
            <person name="Jagels K."/>
            <person name="James K.D."/>
            <person name="Jones L."/>
            <person name="Jones M."/>
            <person name="Leather S."/>
            <person name="McDonald S."/>
            <person name="McLean J."/>
            <person name="Mooney P."/>
            <person name="Moule S."/>
            <person name="Mungall K.L."/>
            <person name="Murphy L.D."/>
            <person name="Niblett D."/>
            <person name="Odell C."/>
            <person name="Oliver K."/>
            <person name="O'Neil S."/>
            <person name="Pearson D."/>
            <person name="Quail M.A."/>
            <person name="Rabbinowitsch E."/>
            <person name="Rutherford K.M."/>
            <person name="Rutter S."/>
            <person name="Saunders D."/>
            <person name="Seeger K."/>
            <person name="Sharp S."/>
            <person name="Skelton J."/>
            <person name="Simmonds M.N."/>
            <person name="Squares R."/>
            <person name="Squares S."/>
            <person name="Stevens K."/>
            <person name="Taylor K."/>
            <person name="Taylor R.G."/>
            <person name="Tivey A."/>
            <person name="Walsh S.V."/>
            <person name="Warren T."/>
            <person name="Whitehead S."/>
            <person name="Woodward J.R."/>
            <person name="Volckaert G."/>
            <person name="Aert R."/>
            <person name="Robben J."/>
            <person name="Grymonprez B."/>
            <person name="Weltjens I."/>
            <person name="Vanstreels E."/>
            <person name="Rieger M."/>
            <person name="Schaefer M."/>
            <person name="Mueller-Auer S."/>
            <person name="Gabel C."/>
            <person name="Fuchs M."/>
            <person name="Duesterhoeft A."/>
            <person name="Fritzc C."/>
            <person name="Holzer E."/>
            <person name="Moestl D."/>
            <person name="Hilbert H."/>
            <person name="Borzym K."/>
            <person name="Langer I."/>
            <person name="Beck A."/>
            <person name="Lehrach H."/>
            <person name="Reinhardt R."/>
            <person name="Pohl T.M."/>
            <person name="Eger P."/>
            <person name="Zimmermann W."/>
            <person name="Wedler H."/>
            <person name="Wambutt R."/>
            <person name="Purnelle B."/>
            <person name="Goffeau A."/>
            <person name="Cadieu E."/>
            <person name="Dreano S."/>
            <person name="Gloux S."/>
            <person name="Lelaure V."/>
            <person name="Mottier S."/>
            <person name="Galibert F."/>
            <person name="Aves S.J."/>
            <person name="Xiang Z."/>
            <person name="Hunt C."/>
            <person name="Moore K."/>
            <person name="Hurst S.M."/>
            <person name="Lucas M."/>
            <person name="Rochet M."/>
            <person name="Gaillardin C."/>
            <person name="Tallada V.A."/>
            <person name="Garzon A."/>
            <person name="Thode G."/>
            <person name="Daga R.R."/>
            <person name="Cruzado L."/>
            <person name="Jimenez J."/>
            <person name="Sanchez M."/>
            <person name="del Rey F."/>
            <person name="Benito J."/>
            <person name="Dominguez A."/>
            <person name="Revuelta J.L."/>
            <person name="Moreno S."/>
            <person name="Armstrong J."/>
            <person name="Forsburg S.L."/>
            <person name="Cerutti L."/>
            <person name="Lowe T."/>
            <person name="McCombie W.R."/>
            <person name="Paulsen I."/>
            <person name="Potashkin J."/>
            <person name="Shpakovski G.V."/>
            <person name="Ussery D."/>
            <person name="Barrell B.G."/>
            <person name="Nurse P."/>
        </authorList>
    </citation>
    <scope>NUCLEOTIDE SEQUENCE [LARGE SCALE GENOMIC DNA]</scope>
    <source>
        <strain>972 / ATCC 24843</strain>
    </source>
</reference>
<reference key="3">
    <citation type="journal article" date="2001" name="J. Biol. Chem.">
        <title>The Cdc42p GTPase and its regulators Nrf1p and Scd1p are involved in endocytic trafficking in the fission yeast Schizosaccharomyces pombe.</title>
        <authorList>
            <person name="Murray J.M."/>
            <person name="Johnson D.I."/>
        </authorList>
    </citation>
    <scope>SUBCELLULAR LOCATION</scope>
    <scope>DISRUPTION PHENOTYPE</scope>
</reference>